<proteinExistence type="inferred from homology"/>
<sequence length="378" mass="43028">MGQSKKLNKQPSSLSPLVQLAGIRKCFDGKEVIPQLDLTINNGEFLTLLGPSGCGKTTVLRLIAGLETVDSGRIMLDNEDITHVPAENRYVNTVFQSYALFPHMTVFENVAFGLRMQKTPAAEITPRVMEALRMVQLETFAQRKPHQLSGGQQQRVAIARAVVNKPRLLLLDESLSALDYKLRKQMQNELKALQRKLGITFVFVTHDQEEALTMSDRIVVMRDGRIEQDGTPREIYEEPKNLFVAGFIGEINMFNATVIERLDEQRVRANVEGRECNIYVNFAVEPGQKLHVLLRPEDLRVEEINDDNHAEGLIGYVRERNYKGMTLESVVELENGKMVMVSEFFNEDDPDFDHSLDQKMAINWVESWEVVLADEEHK</sequence>
<keyword id="KW-0067">ATP-binding</keyword>
<keyword id="KW-0997">Cell inner membrane</keyword>
<keyword id="KW-1003">Cell membrane</keyword>
<keyword id="KW-0472">Membrane</keyword>
<keyword id="KW-0547">Nucleotide-binding</keyword>
<keyword id="KW-1278">Translocase</keyword>
<keyword id="KW-0813">Transport</keyword>
<protein>
    <recommendedName>
        <fullName evidence="1">Spermidine/putrescine import ATP-binding protein PotA</fullName>
        <ecNumber evidence="1">7.6.2.11</ecNumber>
    </recommendedName>
</protein>
<evidence type="ECO:0000255" key="1">
    <source>
        <dbReference type="HAMAP-Rule" id="MF_01726"/>
    </source>
</evidence>
<comment type="function">
    <text evidence="1">Part of the ABC transporter complex PotABCD involved in spermidine/putrescine import. Responsible for energy coupling to the transport system.</text>
</comment>
<comment type="catalytic activity">
    <reaction evidence="1">
        <text>ATP + H2O + polyamine-[polyamine-binding protein]Side 1 = ADP + phosphate + polyamineSide 2 + [polyamine-binding protein]Side 1.</text>
        <dbReference type="EC" id="7.6.2.11"/>
    </reaction>
</comment>
<comment type="subunit">
    <text evidence="1">The complex is composed of two ATP-binding proteins (PotA), two transmembrane proteins (PotB and PotC) and a solute-binding protein (PotD).</text>
</comment>
<comment type="subcellular location">
    <subcellularLocation>
        <location evidence="1">Cell inner membrane</location>
        <topology evidence="1">Peripheral membrane protein</topology>
    </subcellularLocation>
</comment>
<comment type="similarity">
    <text evidence="1">Belongs to the ABC transporter superfamily. Spermidine/putrescine importer (TC 3.A.1.11.1) family.</text>
</comment>
<organism>
    <name type="scientific">Escherichia coli O6:K15:H31 (strain 536 / UPEC)</name>
    <dbReference type="NCBI Taxonomy" id="362663"/>
    <lineage>
        <taxon>Bacteria</taxon>
        <taxon>Pseudomonadati</taxon>
        <taxon>Pseudomonadota</taxon>
        <taxon>Gammaproteobacteria</taxon>
        <taxon>Enterobacterales</taxon>
        <taxon>Enterobacteriaceae</taxon>
        <taxon>Escherichia</taxon>
    </lineage>
</organism>
<gene>
    <name evidence="1" type="primary">potA</name>
    <name type="ordered locus">ECP_1120</name>
</gene>
<name>POTA_ECOL5</name>
<dbReference type="EC" id="7.6.2.11" evidence="1"/>
<dbReference type="EMBL" id="CP000247">
    <property type="protein sequence ID" value="ABG69131.1"/>
    <property type="molecule type" value="Genomic_DNA"/>
</dbReference>
<dbReference type="RefSeq" id="WP_000531594.1">
    <property type="nucleotide sequence ID" value="NC_008253.1"/>
</dbReference>
<dbReference type="SMR" id="Q0TIU8"/>
<dbReference type="GeneID" id="75203712"/>
<dbReference type="KEGG" id="ecp:ECP_1120"/>
<dbReference type="HOGENOM" id="CLU_000604_1_1_6"/>
<dbReference type="Proteomes" id="UP000009182">
    <property type="component" value="Chromosome"/>
</dbReference>
<dbReference type="GO" id="GO:0043190">
    <property type="term" value="C:ATP-binding cassette (ABC) transporter complex"/>
    <property type="evidence" value="ECO:0007669"/>
    <property type="project" value="InterPro"/>
</dbReference>
<dbReference type="GO" id="GO:0015594">
    <property type="term" value="F:ABC-type putrescine transporter activity"/>
    <property type="evidence" value="ECO:0007669"/>
    <property type="project" value="InterPro"/>
</dbReference>
<dbReference type="GO" id="GO:0005524">
    <property type="term" value="F:ATP binding"/>
    <property type="evidence" value="ECO:0007669"/>
    <property type="project" value="UniProtKB-KW"/>
</dbReference>
<dbReference type="GO" id="GO:0016887">
    <property type="term" value="F:ATP hydrolysis activity"/>
    <property type="evidence" value="ECO:0007669"/>
    <property type="project" value="InterPro"/>
</dbReference>
<dbReference type="CDD" id="cd03300">
    <property type="entry name" value="ABC_PotA_N"/>
    <property type="match status" value="1"/>
</dbReference>
<dbReference type="FunFam" id="2.40.50.100:FF:000017">
    <property type="entry name" value="Spermidine/putrescine import ATP-binding protein PotA"/>
    <property type="match status" value="1"/>
</dbReference>
<dbReference type="FunFam" id="3.40.50.300:FF:000133">
    <property type="entry name" value="Spermidine/putrescine import ATP-binding protein PotA"/>
    <property type="match status" value="1"/>
</dbReference>
<dbReference type="Gene3D" id="2.40.50.100">
    <property type="match status" value="1"/>
</dbReference>
<dbReference type="Gene3D" id="3.40.50.300">
    <property type="entry name" value="P-loop containing nucleotide triphosphate hydrolases"/>
    <property type="match status" value="1"/>
</dbReference>
<dbReference type="InterPro" id="IPR003593">
    <property type="entry name" value="AAA+_ATPase"/>
</dbReference>
<dbReference type="InterPro" id="IPR050093">
    <property type="entry name" value="ABC_SmlMolc_Importer"/>
</dbReference>
<dbReference type="InterPro" id="IPR003439">
    <property type="entry name" value="ABC_transporter-like_ATP-bd"/>
</dbReference>
<dbReference type="InterPro" id="IPR017871">
    <property type="entry name" value="ABC_transporter-like_CS"/>
</dbReference>
<dbReference type="InterPro" id="IPR008995">
    <property type="entry name" value="Mo/tungstate-bd_C_term_dom"/>
</dbReference>
<dbReference type="InterPro" id="IPR027417">
    <property type="entry name" value="P-loop_NTPase"/>
</dbReference>
<dbReference type="InterPro" id="IPR005893">
    <property type="entry name" value="PotA-like"/>
</dbReference>
<dbReference type="InterPro" id="IPR017879">
    <property type="entry name" value="PotA_ATP-bd"/>
</dbReference>
<dbReference type="InterPro" id="IPR013611">
    <property type="entry name" value="Transp-assoc_OB_typ2"/>
</dbReference>
<dbReference type="NCBIfam" id="TIGR01187">
    <property type="entry name" value="potA"/>
    <property type="match status" value="1"/>
</dbReference>
<dbReference type="NCBIfam" id="NF006987">
    <property type="entry name" value="PRK09452.1"/>
    <property type="match status" value="1"/>
</dbReference>
<dbReference type="PANTHER" id="PTHR42781">
    <property type="entry name" value="SPERMIDINE/PUTRESCINE IMPORT ATP-BINDING PROTEIN POTA"/>
    <property type="match status" value="1"/>
</dbReference>
<dbReference type="PANTHER" id="PTHR42781:SF4">
    <property type="entry name" value="SPERMIDINE_PUTRESCINE IMPORT ATP-BINDING PROTEIN POTA"/>
    <property type="match status" value="1"/>
</dbReference>
<dbReference type="Pfam" id="PF00005">
    <property type="entry name" value="ABC_tran"/>
    <property type="match status" value="1"/>
</dbReference>
<dbReference type="Pfam" id="PF08402">
    <property type="entry name" value="TOBE_2"/>
    <property type="match status" value="1"/>
</dbReference>
<dbReference type="SMART" id="SM00382">
    <property type="entry name" value="AAA"/>
    <property type="match status" value="1"/>
</dbReference>
<dbReference type="SUPFAM" id="SSF50331">
    <property type="entry name" value="MOP-like"/>
    <property type="match status" value="1"/>
</dbReference>
<dbReference type="SUPFAM" id="SSF52540">
    <property type="entry name" value="P-loop containing nucleoside triphosphate hydrolases"/>
    <property type="match status" value="1"/>
</dbReference>
<dbReference type="PROSITE" id="PS00211">
    <property type="entry name" value="ABC_TRANSPORTER_1"/>
    <property type="match status" value="1"/>
</dbReference>
<dbReference type="PROSITE" id="PS50893">
    <property type="entry name" value="ABC_TRANSPORTER_2"/>
    <property type="match status" value="1"/>
</dbReference>
<dbReference type="PROSITE" id="PS51305">
    <property type="entry name" value="POTA"/>
    <property type="match status" value="1"/>
</dbReference>
<feature type="chain" id="PRO_0000286218" description="Spermidine/putrescine import ATP-binding protein PotA">
    <location>
        <begin position="1"/>
        <end position="378"/>
    </location>
</feature>
<feature type="domain" description="ABC transporter" evidence="1">
    <location>
        <begin position="18"/>
        <end position="248"/>
    </location>
</feature>
<feature type="binding site" evidence="1">
    <location>
        <begin position="50"/>
        <end position="57"/>
    </location>
    <ligand>
        <name>ATP</name>
        <dbReference type="ChEBI" id="CHEBI:30616"/>
    </ligand>
</feature>
<reference key="1">
    <citation type="journal article" date="2006" name="Mol. Microbiol.">
        <title>Role of pathogenicity island-associated integrases in the genome plasticity of uropathogenic Escherichia coli strain 536.</title>
        <authorList>
            <person name="Hochhut B."/>
            <person name="Wilde C."/>
            <person name="Balling G."/>
            <person name="Middendorf B."/>
            <person name="Dobrindt U."/>
            <person name="Brzuszkiewicz E."/>
            <person name="Gottschalk G."/>
            <person name="Carniel E."/>
            <person name="Hacker J."/>
        </authorList>
    </citation>
    <scope>NUCLEOTIDE SEQUENCE [LARGE SCALE GENOMIC DNA]</scope>
    <source>
        <strain>536 / UPEC</strain>
    </source>
</reference>
<accession>Q0TIU8</accession>